<proteinExistence type="inferred from homology"/>
<evidence type="ECO:0000255" key="1">
    <source>
        <dbReference type="HAMAP-Rule" id="MF_00191"/>
    </source>
</evidence>
<gene>
    <name evidence="1" type="primary">ispH</name>
    <name type="ordered locus">PSHAa0921</name>
</gene>
<comment type="function">
    <text evidence="1">Catalyzes the conversion of 1-hydroxy-2-methyl-2-(E)-butenyl 4-diphosphate (HMBPP) into a mixture of isopentenyl diphosphate (IPP) and dimethylallyl diphosphate (DMAPP). Acts in the terminal step of the DOXP/MEP pathway for isoprenoid precursor biosynthesis.</text>
</comment>
<comment type="catalytic activity">
    <reaction evidence="1">
        <text>isopentenyl diphosphate + 2 oxidized [2Fe-2S]-[ferredoxin] + H2O = (2E)-4-hydroxy-3-methylbut-2-enyl diphosphate + 2 reduced [2Fe-2S]-[ferredoxin] + 2 H(+)</text>
        <dbReference type="Rhea" id="RHEA:24488"/>
        <dbReference type="Rhea" id="RHEA-COMP:10000"/>
        <dbReference type="Rhea" id="RHEA-COMP:10001"/>
        <dbReference type="ChEBI" id="CHEBI:15377"/>
        <dbReference type="ChEBI" id="CHEBI:15378"/>
        <dbReference type="ChEBI" id="CHEBI:33737"/>
        <dbReference type="ChEBI" id="CHEBI:33738"/>
        <dbReference type="ChEBI" id="CHEBI:128753"/>
        <dbReference type="ChEBI" id="CHEBI:128769"/>
        <dbReference type="EC" id="1.17.7.4"/>
    </reaction>
</comment>
<comment type="catalytic activity">
    <reaction evidence="1">
        <text>dimethylallyl diphosphate + 2 oxidized [2Fe-2S]-[ferredoxin] + H2O = (2E)-4-hydroxy-3-methylbut-2-enyl diphosphate + 2 reduced [2Fe-2S]-[ferredoxin] + 2 H(+)</text>
        <dbReference type="Rhea" id="RHEA:24825"/>
        <dbReference type="Rhea" id="RHEA-COMP:10000"/>
        <dbReference type="Rhea" id="RHEA-COMP:10001"/>
        <dbReference type="ChEBI" id="CHEBI:15377"/>
        <dbReference type="ChEBI" id="CHEBI:15378"/>
        <dbReference type="ChEBI" id="CHEBI:33737"/>
        <dbReference type="ChEBI" id="CHEBI:33738"/>
        <dbReference type="ChEBI" id="CHEBI:57623"/>
        <dbReference type="ChEBI" id="CHEBI:128753"/>
        <dbReference type="EC" id="1.17.7.4"/>
    </reaction>
</comment>
<comment type="cofactor">
    <cofactor evidence="1">
        <name>[4Fe-4S] cluster</name>
        <dbReference type="ChEBI" id="CHEBI:49883"/>
    </cofactor>
    <text evidence="1">Binds 1 [4Fe-4S] cluster per subunit.</text>
</comment>
<comment type="pathway">
    <text evidence="1">Isoprenoid biosynthesis; dimethylallyl diphosphate biosynthesis; dimethylallyl diphosphate from (2E)-4-hydroxy-3-methylbutenyl diphosphate: step 1/1.</text>
</comment>
<comment type="pathway">
    <text evidence="1">Isoprenoid biosynthesis; isopentenyl diphosphate biosynthesis via DXP pathway; isopentenyl diphosphate from 1-deoxy-D-xylulose 5-phosphate: step 6/6.</text>
</comment>
<comment type="similarity">
    <text evidence="1">Belongs to the IspH family.</text>
</comment>
<keyword id="KW-0004">4Fe-4S</keyword>
<keyword id="KW-0408">Iron</keyword>
<keyword id="KW-0411">Iron-sulfur</keyword>
<keyword id="KW-0414">Isoprene biosynthesis</keyword>
<keyword id="KW-0479">Metal-binding</keyword>
<keyword id="KW-0560">Oxidoreductase</keyword>
<keyword id="KW-1185">Reference proteome</keyword>
<dbReference type="EC" id="1.17.7.4" evidence="1"/>
<dbReference type="EMBL" id="CR954246">
    <property type="protein sequence ID" value="CAI86000.1"/>
    <property type="molecule type" value="Genomic_DNA"/>
</dbReference>
<dbReference type="SMR" id="Q3IE99"/>
<dbReference type="STRING" id="326442.PSHAa0921"/>
<dbReference type="KEGG" id="pha:PSHAa0921"/>
<dbReference type="PATRIC" id="fig|326442.8.peg.882"/>
<dbReference type="eggNOG" id="COG0761">
    <property type="taxonomic scope" value="Bacteria"/>
</dbReference>
<dbReference type="HOGENOM" id="CLU_027486_1_1_6"/>
<dbReference type="BioCyc" id="PHAL326442:PSHA_RS04495-MONOMER"/>
<dbReference type="UniPathway" id="UPA00056">
    <property type="reaction ID" value="UER00097"/>
</dbReference>
<dbReference type="UniPathway" id="UPA00059">
    <property type="reaction ID" value="UER00105"/>
</dbReference>
<dbReference type="Proteomes" id="UP000006843">
    <property type="component" value="Chromosome I"/>
</dbReference>
<dbReference type="GO" id="GO:0051539">
    <property type="term" value="F:4 iron, 4 sulfur cluster binding"/>
    <property type="evidence" value="ECO:0007669"/>
    <property type="project" value="UniProtKB-UniRule"/>
</dbReference>
<dbReference type="GO" id="GO:0051745">
    <property type="term" value="F:4-hydroxy-3-methylbut-2-enyl diphosphate reductase activity"/>
    <property type="evidence" value="ECO:0007669"/>
    <property type="project" value="UniProtKB-UniRule"/>
</dbReference>
<dbReference type="GO" id="GO:0046872">
    <property type="term" value="F:metal ion binding"/>
    <property type="evidence" value="ECO:0007669"/>
    <property type="project" value="UniProtKB-KW"/>
</dbReference>
<dbReference type="GO" id="GO:0050992">
    <property type="term" value="P:dimethylallyl diphosphate biosynthetic process"/>
    <property type="evidence" value="ECO:0007669"/>
    <property type="project" value="UniProtKB-UniRule"/>
</dbReference>
<dbReference type="GO" id="GO:0019288">
    <property type="term" value="P:isopentenyl diphosphate biosynthetic process, methylerythritol 4-phosphate pathway"/>
    <property type="evidence" value="ECO:0007669"/>
    <property type="project" value="UniProtKB-UniRule"/>
</dbReference>
<dbReference type="GO" id="GO:0016114">
    <property type="term" value="P:terpenoid biosynthetic process"/>
    <property type="evidence" value="ECO:0007669"/>
    <property type="project" value="UniProtKB-UniRule"/>
</dbReference>
<dbReference type="CDD" id="cd13944">
    <property type="entry name" value="lytB_ispH"/>
    <property type="match status" value="1"/>
</dbReference>
<dbReference type="Gene3D" id="3.40.50.11270">
    <property type="match status" value="1"/>
</dbReference>
<dbReference type="Gene3D" id="3.40.1010.20">
    <property type="entry name" value="4-hydroxy-3-methylbut-2-enyl diphosphate reductase, catalytic domain"/>
    <property type="match status" value="2"/>
</dbReference>
<dbReference type="HAMAP" id="MF_00191">
    <property type="entry name" value="IspH"/>
    <property type="match status" value="1"/>
</dbReference>
<dbReference type="InterPro" id="IPR003451">
    <property type="entry name" value="LytB/IspH"/>
</dbReference>
<dbReference type="NCBIfam" id="TIGR00216">
    <property type="entry name" value="ispH_lytB"/>
    <property type="match status" value="1"/>
</dbReference>
<dbReference type="NCBIfam" id="NF002188">
    <property type="entry name" value="PRK01045.1-2"/>
    <property type="match status" value="1"/>
</dbReference>
<dbReference type="NCBIfam" id="NF002190">
    <property type="entry name" value="PRK01045.1-4"/>
    <property type="match status" value="1"/>
</dbReference>
<dbReference type="PANTHER" id="PTHR30426">
    <property type="entry name" value="4-HYDROXY-3-METHYLBUT-2-ENYL DIPHOSPHATE REDUCTASE"/>
    <property type="match status" value="1"/>
</dbReference>
<dbReference type="PANTHER" id="PTHR30426:SF0">
    <property type="entry name" value="4-HYDROXY-3-METHYLBUT-2-ENYL DIPHOSPHATE REDUCTASE"/>
    <property type="match status" value="1"/>
</dbReference>
<dbReference type="Pfam" id="PF02401">
    <property type="entry name" value="LYTB"/>
    <property type="match status" value="1"/>
</dbReference>
<name>ISPH_PSET1</name>
<reference key="1">
    <citation type="journal article" date="2005" name="Genome Res.">
        <title>Coping with cold: the genome of the versatile marine Antarctica bacterium Pseudoalteromonas haloplanktis TAC125.</title>
        <authorList>
            <person name="Medigue C."/>
            <person name="Krin E."/>
            <person name="Pascal G."/>
            <person name="Barbe V."/>
            <person name="Bernsel A."/>
            <person name="Bertin P.N."/>
            <person name="Cheung F."/>
            <person name="Cruveiller S."/>
            <person name="D'Amico S."/>
            <person name="Duilio A."/>
            <person name="Fang G."/>
            <person name="Feller G."/>
            <person name="Ho C."/>
            <person name="Mangenot S."/>
            <person name="Marino G."/>
            <person name="Nilsson J."/>
            <person name="Parrilli E."/>
            <person name="Rocha E.P.C."/>
            <person name="Rouy Z."/>
            <person name="Sekowska A."/>
            <person name="Tutino M.L."/>
            <person name="Vallenet D."/>
            <person name="von Heijne G."/>
            <person name="Danchin A."/>
        </authorList>
    </citation>
    <scope>NUCLEOTIDE SEQUENCE [LARGE SCALE GENOMIC DNA]</scope>
    <source>
        <strain>TAC 125</strain>
    </source>
</reference>
<accession>Q3IE99</accession>
<sequence length="309" mass="33834">MEILLANPRGFCAGVDRAISIVERALDIFEKPIYVRHEVVHNRYVVDGLKSRGAVFVEELDQIPDDSIVIFSAHGVSQAVRTEAKRRDLKIFDATCPLVTKVHMEVTRASRKGIECILIGHQGHPEVEGTMGQYGNDGGGIYLVETVEDVAKLNVKNADNLFYCSQTTLSVDDTADVIDALRAKFPAIDGPRKDDICYATQNRQDAVRDLADKVDVLLVVGAKNSSNSNRLRELADKMGTKAYLIDDATNVQESWFTGINAVGVTAGASAPEVLVQQVITRLKELGGNQVTENPGEEENIVFAVPIELR</sequence>
<organism>
    <name type="scientific">Pseudoalteromonas translucida (strain TAC 125)</name>
    <dbReference type="NCBI Taxonomy" id="326442"/>
    <lineage>
        <taxon>Bacteria</taxon>
        <taxon>Pseudomonadati</taxon>
        <taxon>Pseudomonadota</taxon>
        <taxon>Gammaproteobacteria</taxon>
        <taxon>Alteromonadales</taxon>
        <taxon>Pseudoalteromonadaceae</taxon>
        <taxon>Pseudoalteromonas</taxon>
    </lineage>
</organism>
<feature type="chain" id="PRO_1000021162" description="4-hydroxy-3-methylbut-2-enyl diphosphate reductase">
    <location>
        <begin position="1"/>
        <end position="309"/>
    </location>
</feature>
<feature type="active site" description="Proton donor" evidence="1">
    <location>
        <position position="126"/>
    </location>
</feature>
<feature type="binding site" evidence="1">
    <location>
        <position position="12"/>
    </location>
    <ligand>
        <name>[4Fe-4S] cluster</name>
        <dbReference type="ChEBI" id="CHEBI:49883"/>
    </ligand>
</feature>
<feature type="binding site" evidence="1">
    <location>
        <position position="41"/>
    </location>
    <ligand>
        <name>(2E)-4-hydroxy-3-methylbut-2-enyl diphosphate</name>
        <dbReference type="ChEBI" id="CHEBI:128753"/>
    </ligand>
</feature>
<feature type="binding site" evidence="1">
    <location>
        <position position="41"/>
    </location>
    <ligand>
        <name>dimethylallyl diphosphate</name>
        <dbReference type="ChEBI" id="CHEBI:57623"/>
    </ligand>
</feature>
<feature type="binding site" evidence="1">
    <location>
        <position position="41"/>
    </location>
    <ligand>
        <name>isopentenyl diphosphate</name>
        <dbReference type="ChEBI" id="CHEBI:128769"/>
    </ligand>
</feature>
<feature type="binding site" evidence="1">
    <location>
        <position position="74"/>
    </location>
    <ligand>
        <name>(2E)-4-hydroxy-3-methylbut-2-enyl diphosphate</name>
        <dbReference type="ChEBI" id="CHEBI:128753"/>
    </ligand>
</feature>
<feature type="binding site" evidence="1">
    <location>
        <position position="74"/>
    </location>
    <ligand>
        <name>dimethylallyl diphosphate</name>
        <dbReference type="ChEBI" id="CHEBI:57623"/>
    </ligand>
</feature>
<feature type="binding site" evidence="1">
    <location>
        <position position="74"/>
    </location>
    <ligand>
        <name>isopentenyl diphosphate</name>
        <dbReference type="ChEBI" id="CHEBI:128769"/>
    </ligand>
</feature>
<feature type="binding site" evidence="1">
    <location>
        <position position="96"/>
    </location>
    <ligand>
        <name>[4Fe-4S] cluster</name>
        <dbReference type="ChEBI" id="CHEBI:49883"/>
    </ligand>
</feature>
<feature type="binding site" evidence="1">
    <location>
        <position position="124"/>
    </location>
    <ligand>
        <name>(2E)-4-hydroxy-3-methylbut-2-enyl diphosphate</name>
        <dbReference type="ChEBI" id="CHEBI:128753"/>
    </ligand>
</feature>
<feature type="binding site" evidence="1">
    <location>
        <position position="124"/>
    </location>
    <ligand>
        <name>dimethylallyl diphosphate</name>
        <dbReference type="ChEBI" id="CHEBI:57623"/>
    </ligand>
</feature>
<feature type="binding site" evidence="1">
    <location>
        <position position="124"/>
    </location>
    <ligand>
        <name>isopentenyl diphosphate</name>
        <dbReference type="ChEBI" id="CHEBI:128769"/>
    </ligand>
</feature>
<feature type="binding site" evidence="1">
    <location>
        <position position="167"/>
    </location>
    <ligand>
        <name>(2E)-4-hydroxy-3-methylbut-2-enyl diphosphate</name>
        <dbReference type="ChEBI" id="CHEBI:128753"/>
    </ligand>
</feature>
<feature type="binding site" evidence="1">
    <location>
        <position position="197"/>
    </location>
    <ligand>
        <name>[4Fe-4S] cluster</name>
        <dbReference type="ChEBI" id="CHEBI:49883"/>
    </ligand>
</feature>
<feature type="binding site" evidence="1">
    <location>
        <position position="225"/>
    </location>
    <ligand>
        <name>(2E)-4-hydroxy-3-methylbut-2-enyl diphosphate</name>
        <dbReference type="ChEBI" id="CHEBI:128753"/>
    </ligand>
</feature>
<feature type="binding site" evidence="1">
    <location>
        <position position="225"/>
    </location>
    <ligand>
        <name>dimethylallyl diphosphate</name>
        <dbReference type="ChEBI" id="CHEBI:57623"/>
    </ligand>
</feature>
<feature type="binding site" evidence="1">
    <location>
        <position position="225"/>
    </location>
    <ligand>
        <name>isopentenyl diphosphate</name>
        <dbReference type="ChEBI" id="CHEBI:128769"/>
    </ligand>
</feature>
<feature type="binding site" evidence="1">
    <location>
        <position position="226"/>
    </location>
    <ligand>
        <name>(2E)-4-hydroxy-3-methylbut-2-enyl diphosphate</name>
        <dbReference type="ChEBI" id="CHEBI:128753"/>
    </ligand>
</feature>
<feature type="binding site" evidence="1">
    <location>
        <position position="226"/>
    </location>
    <ligand>
        <name>dimethylallyl diphosphate</name>
        <dbReference type="ChEBI" id="CHEBI:57623"/>
    </ligand>
</feature>
<feature type="binding site" evidence="1">
    <location>
        <position position="226"/>
    </location>
    <ligand>
        <name>isopentenyl diphosphate</name>
        <dbReference type="ChEBI" id="CHEBI:128769"/>
    </ligand>
</feature>
<feature type="binding site" evidence="1">
    <location>
        <position position="227"/>
    </location>
    <ligand>
        <name>(2E)-4-hydroxy-3-methylbut-2-enyl diphosphate</name>
        <dbReference type="ChEBI" id="CHEBI:128753"/>
    </ligand>
</feature>
<feature type="binding site" evidence="1">
    <location>
        <position position="227"/>
    </location>
    <ligand>
        <name>dimethylallyl diphosphate</name>
        <dbReference type="ChEBI" id="CHEBI:57623"/>
    </ligand>
</feature>
<feature type="binding site" evidence="1">
    <location>
        <position position="227"/>
    </location>
    <ligand>
        <name>isopentenyl diphosphate</name>
        <dbReference type="ChEBI" id="CHEBI:128769"/>
    </ligand>
</feature>
<feature type="binding site" evidence="1">
    <location>
        <position position="269"/>
    </location>
    <ligand>
        <name>(2E)-4-hydroxy-3-methylbut-2-enyl diphosphate</name>
        <dbReference type="ChEBI" id="CHEBI:128753"/>
    </ligand>
</feature>
<feature type="binding site" evidence="1">
    <location>
        <position position="269"/>
    </location>
    <ligand>
        <name>dimethylallyl diphosphate</name>
        <dbReference type="ChEBI" id="CHEBI:57623"/>
    </ligand>
</feature>
<feature type="binding site" evidence="1">
    <location>
        <position position="269"/>
    </location>
    <ligand>
        <name>isopentenyl diphosphate</name>
        <dbReference type="ChEBI" id="CHEBI:128769"/>
    </ligand>
</feature>
<protein>
    <recommendedName>
        <fullName evidence="1">4-hydroxy-3-methylbut-2-enyl diphosphate reductase</fullName>
        <shortName evidence="1">HMBPP reductase</shortName>
        <ecNumber evidence="1">1.17.7.4</ecNumber>
    </recommendedName>
</protein>